<keyword id="KW-0119">Carbohydrate metabolism</keyword>
<keyword id="KW-0963">Cytoplasm</keyword>
<keyword id="KW-0413">Isomerase</keyword>
<keyword id="KW-0684">Rhamnose metabolism</keyword>
<reference key="1">
    <citation type="journal article" date="2011" name="J. Bacteriol.">
        <title>Comparative genomics of 28 Salmonella enterica isolates: evidence for CRISPR-mediated adaptive sublineage evolution.</title>
        <authorList>
            <person name="Fricke W.F."/>
            <person name="Mammel M.K."/>
            <person name="McDermott P.F."/>
            <person name="Tartera C."/>
            <person name="White D.G."/>
            <person name="Leclerc J.E."/>
            <person name="Ravel J."/>
            <person name="Cebula T.A."/>
        </authorList>
    </citation>
    <scope>NUCLEOTIDE SEQUENCE [LARGE SCALE GENOMIC DNA]</scope>
    <source>
        <strain>CVM19633</strain>
    </source>
</reference>
<gene>
    <name evidence="1" type="primary">rhaM</name>
    <name type="ordered locus">SeSA_A4257</name>
</gene>
<comment type="function">
    <text evidence="1">Involved in the anomeric conversion of L-rhamnose.</text>
</comment>
<comment type="catalytic activity">
    <reaction evidence="1">
        <text>alpha-L-rhamnose = beta-L-rhamnose</text>
        <dbReference type="Rhea" id="RHEA:25584"/>
        <dbReference type="ChEBI" id="CHEBI:27586"/>
        <dbReference type="ChEBI" id="CHEBI:27907"/>
        <dbReference type="EC" id="5.1.3.32"/>
    </reaction>
</comment>
<comment type="pathway">
    <text evidence="1">Carbohydrate metabolism; L-rhamnose metabolism.</text>
</comment>
<comment type="subunit">
    <text evidence="1">Homodimer.</text>
</comment>
<comment type="subcellular location">
    <subcellularLocation>
        <location evidence="1">Cytoplasm</location>
    </subcellularLocation>
</comment>
<comment type="similarity">
    <text evidence="1">Belongs to the rhamnose mutarotase family.</text>
</comment>
<dbReference type="EC" id="5.1.3.32" evidence="1"/>
<dbReference type="EMBL" id="CP001127">
    <property type="protein sequence ID" value="ACF92698.1"/>
    <property type="molecule type" value="Genomic_DNA"/>
</dbReference>
<dbReference type="RefSeq" id="WP_000619478.1">
    <property type="nucleotide sequence ID" value="NC_011094.1"/>
</dbReference>
<dbReference type="SMR" id="B4TPQ4"/>
<dbReference type="KEGG" id="sew:SeSA_A4257"/>
<dbReference type="HOGENOM" id="CLU_100689_2_0_6"/>
<dbReference type="UniPathway" id="UPA00125"/>
<dbReference type="Proteomes" id="UP000001865">
    <property type="component" value="Chromosome"/>
</dbReference>
<dbReference type="GO" id="GO:0005737">
    <property type="term" value="C:cytoplasm"/>
    <property type="evidence" value="ECO:0007669"/>
    <property type="project" value="UniProtKB-SubCell"/>
</dbReference>
<dbReference type="GO" id="GO:0062192">
    <property type="term" value="F:L-rhamnose mutarotase activity"/>
    <property type="evidence" value="ECO:0007669"/>
    <property type="project" value="UniProtKB-EC"/>
</dbReference>
<dbReference type="GO" id="GO:0019301">
    <property type="term" value="P:rhamnose catabolic process"/>
    <property type="evidence" value="ECO:0007669"/>
    <property type="project" value="TreeGrafter"/>
</dbReference>
<dbReference type="Gene3D" id="3.30.70.100">
    <property type="match status" value="1"/>
</dbReference>
<dbReference type="HAMAP" id="MF_01663">
    <property type="entry name" value="L_rham_rotase"/>
    <property type="match status" value="1"/>
</dbReference>
<dbReference type="InterPro" id="IPR011008">
    <property type="entry name" value="Dimeric_a/b-barrel"/>
</dbReference>
<dbReference type="InterPro" id="IPR013448">
    <property type="entry name" value="L-rhamnose_mutarotase"/>
</dbReference>
<dbReference type="InterPro" id="IPR008000">
    <property type="entry name" value="Rham/fucose_mutarotase"/>
</dbReference>
<dbReference type="NCBIfam" id="TIGR02625">
    <property type="entry name" value="YiiL_rotase"/>
    <property type="match status" value="1"/>
</dbReference>
<dbReference type="PANTHER" id="PTHR34389">
    <property type="entry name" value="L-RHAMNOSE MUTAROTASE"/>
    <property type="match status" value="1"/>
</dbReference>
<dbReference type="PANTHER" id="PTHR34389:SF2">
    <property type="entry name" value="L-RHAMNOSE MUTAROTASE"/>
    <property type="match status" value="1"/>
</dbReference>
<dbReference type="Pfam" id="PF05336">
    <property type="entry name" value="rhaM"/>
    <property type="match status" value="1"/>
</dbReference>
<dbReference type="SUPFAM" id="SSF54909">
    <property type="entry name" value="Dimeric alpha+beta barrel"/>
    <property type="match status" value="1"/>
</dbReference>
<organism>
    <name type="scientific">Salmonella schwarzengrund (strain CVM19633)</name>
    <dbReference type="NCBI Taxonomy" id="439843"/>
    <lineage>
        <taxon>Bacteria</taxon>
        <taxon>Pseudomonadati</taxon>
        <taxon>Pseudomonadota</taxon>
        <taxon>Gammaproteobacteria</taxon>
        <taxon>Enterobacterales</taxon>
        <taxon>Enterobacteriaceae</taxon>
        <taxon>Salmonella</taxon>
    </lineage>
</organism>
<name>RHAM_SALSV</name>
<proteinExistence type="inferred from homology"/>
<sequence length="104" mass="12334">MIRKAFVMQVNADAHEEYQRRHNPIWPELEAVLKSHGAHHYAIYLDQERNLLFATVEIESEERWNAVASTDVCQRWWKHMRDVMPANPDNSPVSAELKEVFYLQ</sequence>
<evidence type="ECO:0000255" key="1">
    <source>
        <dbReference type="HAMAP-Rule" id="MF_01663"/>
    </source>
</evidence>
<feature type="chain" id="PRO_1000187232" description="L-rhamnose mutarotase">
    <location>
        <begin position="1"/>
        <end position="104"/>
    </location>
</feature>
<feature type="active site" description="Proton donor" evidence="1">
    <location>
        <position position="22"/>
    </location>
</feature>
<feature type="binding site" evidence="1">
    <location>
        <position position="18"/>
    </location>
    <ligand>
        <name>substrate</name>
    </ligand>
</feature>
<feature type="binding site" evidence="1">
    <location>
        <position position="41"/>
    </location>
    <ligand>
        <name>substrate</name>
    </ligand>
</feature>
<feature type="binding site" evidence="1">
    <location>
        <begin position="76"/>
        <end position="77"/>
    </location>
    <ligand>
        <name>substrate</name>
    </ligand>
</feature>
<protein>
    <recommendedName>
        <fullName evidence="1">L-rhamnose mutarotase</fullName>
        <ecNumber evidence="1">5.1.3.32</ecNumber>
    </recommendedName>
    <alternativeName>
        <fullName evidence="1">Rhamnose 1-epimerase</fullName>
    </alternativeName>
    <alternativeName>
        <fullName evidence="1">Type-3 mutarotase</fullName>
    </alternativeName>
</protein>
<accession>B4TPQ4</accession>